<organism>
    <name type="scientific">Rickettsia akari</name>
    <dbReference type="NCBI Taxonomy" id="786"/>
    <lineage>
        <taxon>Bacteria</taxon>
        <taxon>Pseudomonadati</taxon>
        <taxon>Pseudomonadota</taxon>
        <taxon>Alphaproteobacteria</taxon>
        <taxon>Rickettsiales</taxon>
        <taxon>Rickettsiaceae</taxon>
        <taxon>Rickettsieae</taxon>
        <taxon>Rickettsia</taxon>
        <taxon>spotted fever group</taxon>
    </lineage>
</organism>
<comment type="function">
    <text evidence="1">Attaches a formyl group to the free amino group of methionyl-tRNA(fMet). The formyl group appears to play a dual role in the initiator identity of N-formylmethionyl-tRNA by promoting its recognition by IF2 and preventing the misappropriation of this tRNA by the elongation apparatus.</text>
</comment>
<comment type="catalytic activity">
    <reaction evidence="1">
        <text>L-methionyl-tRNA(fMet) + (6R)-10-formyltetrahydrofolate = N-formyl-L-methionyl-tRNA(fMet) + (6S)-5,6,7,8-tetrahydrofolate + H(+)</text>
        <dbReference type="Rhea" id="RHEA:24380"/>
        <dbReference type="Rhea" id="RHEA-COMP:9952"/>
        <dbReference type="Rhea" id="RHEA-COMP:9953"/>
        <dbReference type="ChEBI" id="CHEBI:15378"/>
        <dbReference type="ChEBI" id="CHEBI:57453"/>
        <dbReference type="ChEBI" id="CHEBI:78530"/>
        <dbReference type="ChEBI" id="CHEBI:78844"/>
        <dbReference type="ChEBI" id="CHEBI:195366"/>
        <dbReference type="EC" id="2.1.2.9"/>
    </reaction>
</comment>
<comment type="similarity">
    <text evidence="2">Belongs to the Fmt family.</text>
</comment>
<dbReference type="EC" id="2.1.2.9" evidence="1"/>
<dbReference type="EMBL" id="Y13129">
    <property type="protein sequence ID" value="CAA73596.1"/>
    <property type="molecule type" value="Genomic_DNA"/>
</dbReference>
<dbReference type="SMR" id="O33509"/>
<dbReference type="GO" id="GO:0004479">
    <property type="term" value="F:methionyl-tRNA formyltransferase activity"/>
    <property type="evidence" value="ECO:0007669"/>
    <property type="project" value="UniProtKB-EC"/>
</dbReference>
<dbReference type="CDD" id="cd08704">
    <property type="entry name" value="Met_tRNA_FMT_C"/>
    <property type="match status" value="1"/>
</dbReference>
<dbReference type="Gene3D" id="3.10.25.10">
    <property type="entry name" value="Formyl transferase, C-terminal domain"/>
    <property type="match status" value="1"/>
</dbReference>
<dbReference type="InterPro" id="IPR005793">
    <property type="entry name" value="Formyl_trans_C"/>
</dbReference>
<dbReference type="InterPro" id="IPR037022">
    <property type="entry name" value="Formyl_trans_C_sf"/>
</dbReference>
<dbReference type="InterPro" id="IPR011034">
    <property type="entry name" value="Formyl_transferase-like_C_sf"/>
</dbReference>
<dbReference type="InterPro" id="IPR044135">
    <property type="entry name" value="Met-tRNA-FMT_C"/>
</dbReference>
<dbReference type="Pfam" id="PF02911">
    <property type="entry name" value="Formyl_trans_C"/>
    <property type="match status" value="1"/>
</dbReference>
<dbReference type="SUPFAM" id="SSF50486">
    <property type="entry name" value="FMT C-terminal domain-like"/>
    <property type="match status" value="1"/>
</dbReference>
<sequence>YFSYNDKVIKILEAEYLNTIHHVTAGTVISDKLEIACGSGILQVKKLQQESKKALNVEEFLRGTNILKATILK</sequence>
<protein>
    <recommendedName>
        <fullName evidence="1">Methionyl-tRNA formyltransferase</fullName>
        <ecNumber evidence="1">2.1.2.9</ecNumber>
    </recommendedName>
</protein>
<reference key="1">
    <citation type="submission" date="1997-05" db="EMBL/GenBank/DDBJ databases">
        <title>Rearrangement of the rRNA genes in Rickettsia preceeded the divergence of the typhus and the spotted fever group Rickettsia.</title>
        <authorList>
            <person name="Andersson S.G.E."/>
            <person name="Stothard D.R."/>
            <person name="Romedenne M."/>
            <person name="Viseur N."/>
            <person name="Fuerst P."/>
            <person name="Kurland C.G."/>
        </authorList>
    </citation>
    <scope>NUCLEOTIDE SEQUENCE [GENOMIC DNA]</scope>
</reference>
<keyword id="KW-0648">Protein biosynthesis</keyword>
<keyword id="KW-0808">Transferase</keyword>
<evidence type="ECO:0000250" key="1">
    <source>
        <dbReference type="UniProtKB" id="P23882"/>
    </source>
</evidence>
<evidence type="ECO:0000305" key="2"/>
<gene>
    <name type="primary">fmt</name>
</gene>
<proteinExistence type="inferred from homology"/>
<feature type="chain" id="PRO_0000083025" description="Methionyl-tRNA formyltransferase">
    <location>
        <begin position="1" status="less than"/>
        <end position="73"/>
    </location>
</feature>
<feature type="non-terminal residue">
    <location>
        <position position="1"/>
    </location>
</feature>
<name>FMT_RICAK</name>
<accession>O33509</accession>